<accession>Q7TQN3</accession>
<accession>Q5SUS5</accession>
<reference key="1">
    <citation type="journal article" date="2003" name="Mol. Endocrinol.">
        <title>Regulation of myostatin in vivo by growth and differentiation factor-associated serum protein-1: a novel protein with protease inhibitor and follistatin domains.</title>
        <authorList>
            <person name="Hill J.J."/>
            <person name="Qiu Y."/>
            <person name="Hewick R.M."/>
            <person name="Wolfman N.M."/>
        </authorList>
    </citation>
    <scope>NUCLEOTIDE SEQUENCE [MRNA]</scope>
    <scope>PROTEIN SEQUENCE OF 30-40</scope>
    <scope>IDENTIFICATION BY MASS SPECTROMETRY</scope>
    <scope>SUBCELLULAR LOCATION</scope>
    <scope>TISSUE SPECIFICITY</scope>
    <scope>INTERACTION WITH MSTN</scope>
    <source>
        <strain>BALB/cJ</strain>
    </source>
</reference>
<reference key="2">
    <citation type="journal article" date="2009" name="PLoS Biol.">
        <title>Lineage-specific biology revealed by a finished genome assembly of the mouse.</title>
        <authorList>
            <person name="Church D.M."/>
            <person name="Goodstadt L."/>
            <person name="Hillier L.W."/>
            <person name="Zody M.C."/>
            <person name="Goldstein S."/>
            <person name="She X."/>
            <person name="Bult C.J."/>
            <person name="Agarwala R."/>
            <person name="Cherry J.L."/>
            <person name="DiCuccio M."/>
            <person name="Hlavina W."/>
            <person name="Kapustin Y."/>
            <person name="Meric P."/>
            <person name="Maglott D."/>
            <person name="Birtle Z."/>
            <person name="Marques A.C."/>
            <person name="Graves T."/>
            <person name="Zhou S."/>
            <person name="Teague B."/>
            <person name="Potamousis K."/>
            <person name="Churas C."/>
            <person name="Place M."/>
            <person name="Herschleb J."/>
            <person name="Runnheim R."/>
            <person name="Forrest D."/>
            <person name="Amos-Landgraf J."/>
            <person name="Schwartz D.C."/>
            <person name="Cheng Z."/>
            <person name="Lindblad-Toh K."/>
            <person name="Eichler E.E."/>
            <person name="Ponting C.P."/>
        </authorList>
    </citation>
    <scope>NUCLEOTIDE SEQUENCE [LARGE SCALE GENOMIC DNA]</scope>
    <source>
        <strain>C57BL/6J</strain>
    </source>
</reference>
<evidence type="ECO:0000250" key="1"/>
<evidence type="ECO:0000255" key="2"/>
<evidence type="ECO:0000255" key="3">
    <source>
        <dbReference type="PROSITE-ProRule" id="PRU00031"/>
    </source>
</evidence>
<evidence type="ECO:0000255" key="4">
    <source>
        <dbReference type="PROSITE-ProRule" id="PRU00295"/>
    </source>
</evidence>
<evidence type="ECO:0000255" key="5">
    <source>
        <dbReference type="PROSITE-ProRule" id="PRU00722"/>
    </source>
</evidence>
<evidence type="ECO:0000255" key="6">
    <source>
        <dbReference type="PROSITE-ProRule" id="PRU00798"/>
    </source>
</evidence>
<evidence type="ECO:0000269" key="7">
    <source>
    </source>
</evidence>
<evidence type="ECO:0000305" key="8"/>
<evidence type="ECO:0007829" key="9">
    <source>
        <dbReference type="PDB" id="6MAA"/>
    </source>
</evidence>
<organism>
    <name type="scientific">Mus musculus</name>
    <name type="common">Mouse</name>
    <dbReference type="NCBI Taxonomy" id="10090"/>
    <lineage>
        <taxon>Eukaryota</taxon>
        <taxon>Metazoa</taxon>
        <taxon>Chordata</taxon>
        <taxon>Craniata</taxon>
        <taxon>Vertebrata</taxon>
        <taxon>Euteleostomi</taxon>
        <taxon>Mammalia</taxon>
        <taxon>Eutheria</taxon>
        <taxon>Euarchontoglires</taxon>
        <taxon>Glires</taxon>
        <taxon>Rodentia</taxon>
        <taxon>Myomorpha</taxon>
        <taxon>Muroidea</taxon>
        <taxon>Muridae</taxon>
        <taxon>Murinae</taxon>
        <taxon>Mus</taxon>
        <taxon>Mus</taxon>
    </lineage>
</organism>
<sequence>MCAPGYHRFWFHWGLLLLLLLEAPLRGLALPPIRYSHAGICPNDMNPNLWVDAQSTCKRECETDQECETYEKCCPNVCGTKSCVAARYMDVKGKKGPVGMPKEATCDHFMCLQQGSECDIWDGQPVCKCKDRCEKEPSFTCASDGLTYYNRCFMDAEACSKGITLSVVTCRYHFTWPNTSPPPPETTVHPTTASPETLGLDMAAPALLNHPVHQSVTVGETVSFLCDVVGRPRPELTWEKQLEDRENVVMRPNHVRGNVVVTNIAQLVIYNVQPQDAGIYTCTARNVAGVLRADFPLSVVRGGQARATSESSLNGTAFPATECLKPPDSEDCGEEQTRWHFDAQANNCLTFTFGHCHHNLNHFETYEACMLACMSGPLAICSLPALQGPCKAYVPRWAYNSQTGLCQSFVYGGCEGNGNNFESREACEESCPFPRGNQHCRACKPRQKLVTSFCRSDFVILGRVSELTEEQDSGRALVTVDEVLKDEKMGLKFLGREPLEVTLLHVDWTCPCPNVTVGETPLIIMGEVDGGMAMLRPDSFVGASSTRRVRKLREVMYKKTCDVLKDFLGLQ</sequence>
<name>WFKN2_MOUSE</name>
<keyword id="KW-0002">3D-structure</keyword>
<keyword id="KW-0903">Direct protein sequencing</keyword>
<keyword id="KW-1015">Disulfide bond</keyword>
<keyword id="KW-0325">Glycoprotein</keyword>
<keyword id="KW-0393">Immunoglobulin domain</keyword>
<keyword id="KW-0481">Metalloenzyme inhibitor</keyword>
<keyword id="KW-0483">Metalloprotease inhibitor</keyword>
<keyword id="KW-0646">Protease inhibitor</keyword>
<keyword id="KW-1185">Reference proteome</keyword>
<keyword id="KW-0677">Repeat</keyword>
<keyword id="KW-0964">Secreted</keyword>
<keyword id="KW-0722">Serine protease inhibitor</keyword>
<keyword id="KW-0732">Signal</keyword>
<proteinExistence type="evidence at protein level"/>
<dbReference type="EMBL" id="AY308804">
    <property type="protein sequence ID" value="AAP72503.1"/>
    <property type="molecule type" value="mRNA"/>
</dbReference>
<dbReference type="EMBL" id="AL645846">
    <property type="status" value="NOT_ANNOTATED_CDS"/>
    <property type="molecule type" value="Genomic_DNA"/>
</dbReference>
<dbReference type="CCDS" id="CCDS25251.1"/>
<dbReference type="RefSeq" id="NP_861540.2">
    <property type="nucleotide sequence ID" value="NM_181819.2"/>
</dbReference>
<dbReference type="RefSeq" id="XP_006533561.1">
    <property type="nucleotide sequence ID" value="XM_006533498.5"/>
</dbReference>
<dbReference type="RefSeq" id="XP_006533562.1">
    <property type="nucleotide sequence ID" value="XM_006533499.5"/>
</dbReference>
<dbReference type="RefSeq" id="XP_006533563.1">
    <property type="nucleotide sequence ID" value="XM_006533500.5"/>
</dbReference>
<dbReference type="RefSeq" id="XP_006533564.1">
    <property type="nucleotide sequence ID" value="XM_006533501.5"/>
</dbReference>
<dbReference type="RefSeq" id="XP_006533565.1">
    <property type="nucleotide sequence ID" value="XM_006533502.4"/>
</dbReference>
<dbReference type="RefSeq" id="XP_011247365.1">
    <property type="nucleotide sequence ID" value="XM_011249063.4"/>
</dbReference>
<dbReference type="PDB" id="6MAA">
    <property type="method" value="X-ray"/>
    <property type="resolution" value="1.39 A"/>
    <property type="chains" value="A=97-172"/>
</dbReference>
<dbReference type="PDBsum" id="6MAA"/>
<dbReference type="SMR" id="Q7TQN3"/>
<dbReference type="BioGRID" id="234985">
    <property type="interactions" value="3"/>
</dbReference>
<dbReference type="CORUM" id="Q7TQN3"/>
<dbReference type="FunCoup" id="Q7TQN3">
    <property type="interactions" value="505"/>
</dbReference>
<dbReference type="STRING" id="10090.ENSMUSP00000053238"/>
<dbReference type="MEROPS" id="I02.954"/>
<dbReference type="GlyCosmos" id="Q7TQN3">
    <property type="glycosylation" value="2 sites, No reported glycans"/>
</dbReference>
<dbReference type="GlyGen" id="Q7TQN3">
    <property type="glycosylation" value="4 sites"/>
</dbReference>
<dbReference type="PhosphoSitePlus" id="Q7TQN3"/>
<dbReference type="PaxDb" id="10090-ENSMUSP00000053238"/>
<dbReference type="ProteomicsDB" id="299767"/>
<dbReference type="Antibodypedia" id="2618">
    <property type="antibodies" value="125 antibodies from 18 providers"/>
</dbReference>
<dbReference type="DNASU" id="278507"/>
<dbReference type="Ensembl" id="ENSMUST00000061469.4">
    <property type="protein sequence ID" value="ENSMUSP00000053238.4"/>
    <property type="gene ID" value="ENSMUSG00000044177.5"/>
</dbReference>
<dbReference type="GeneID" id="278507"/>
<dbReference type="KEGG" id="mmu:278507"/>
<dbReference type="UCSC" id="uc007kyg.2">
    <property type="organism name" value="mouse"/>
</dbReference>
<dbReference type="AGR" id="MGI:2669209"/>
<dbReference type="CTD" id="124857"/>
<dbReference type="MGI" id="MGI:2669209">
    <property type="gene designation" value="Wfikkn2"/>
</dbReference>
<dbReference type="VEuPathDB" id="HostDB:ENSMUSG00000044177"/>
<dbReference type="eggNOG" id="KOG4597">
    <property type="taxonomic scope" value="Eukaryota"/>
</dbReference>
<dbReference type="GeneTree" id="ENSGT00940000160624"/>
<dbReference type="HOGENOM" id="CLU_037211_1_0_1"/>
<dbReference type="InParanoid" id="Q7TQN3"/>
<dbReference type="OMA" id="FTFGRCH"/>
<dbReference type="OrthoDB" id="8187079at2759"/>
<dbReference type="PhylomeDB" id="Q7TQN3"/>
<dbReference type="TreeFam" id="TF315349"/>
<dbReference type="BioGRID-ORCS" id="278507">
    <property type="hits" value="3 hits in 79 CRISPR screens"/>
</dbReference>
<dbReference type="PRO" id="PR:Q7TQN3"/>
<dbReference type="Proteomes" id="UP000000589">
    <property type="component" value="Chromosome 11"/>
</dbReference>
<dbReference type="RNAct" id="Q7TQN3">
    <property type="molecule type" value="protein"/>
</dbReference>
<dbReference type="Bgee" id="ENSMUSG00000044177">
    <property type="expression patterns" value="Expressed in otolith organ and 65 other cell types or tissues"/>
</dbReference>
<dbReference type="GO" id="GO:0005576">
    <property type="term" value="C:extracellular region"/>
    <property type="evidence" value="ECO:0000314"/>
    <property type="project" value="MGI"/>
</dbReference>
<dbReference type="GO" id="GO:0005615">
    <property type="term" value="C:extracellular space"/>
    <property type="evidence" value="ECO:0000314"/>
    <property type="project" value="UniProtKB"/>
</dbReference>
<dbReference type="GO" id="GO:0048019">
    <property type="term" value="F:receptor antagonist activity"/>
    <property type="evidence" value="ECO:0007669"/>
    <property type="project" value="Ensembl"/>
</dbReference>
<dbReference type="GO" id="GO:0004867">
    <property type="term" value="F:serine-type endopeptidase inhibitor activity"/>
    <property type="evidence" value="ECO:0007669"/>
    <property type="project" value="UniProtKB-KW"/>
</dbReference>
<dbReference type="GO" id="GO:0050431">
    <property type="term" value="F:transforming growth factor beta binding"/>
    <property type="evidence" value="ECO:0007669"/>
    <property type="project" value="Ensembl"/>
</dbReference>
<dbReference type="GO" id="GO:0055001">
    <property type="term" value="P:muscle cell development"/>
    <property type="evidence" value="ECO:0000315"/>
    <property type="project" value="MGI"/>
</dbReference>
<dbReference type="GO" id="GO:0030512">
    <property type="term" value="P:negative regulation of transforming growth factor beta receptor signaling pathway"/>
    <property type="evidence" value="ECO:0007669"/>
    <property type="project" value="Ensembl"/>
</dbReference>
<dbReference type="GO" id="GO:0060021">
    <property type="term" value="P:roof of mouth development"/>
    <property type="evidence" value="ECO:0000316"/>
    <property type="project" value="MGI"/>
</dbReference>
<dbReference type="GO" id="GO:0001501">
    <property type="term" value="P:skeletal system development"/>
    <property type="evidence" value="ECO:0000316"/>
    <property type="project" value="MGI"/>
</dbReference>
<dbReference type="GO" id="GO:0007179">
    <property type="term" value="P:transforming growth factor beta receptor signaling pathway"/>
    <property type="evidence" value="ECO:0000314"/>
    <property type="project" value="MGI"/>
</dbReference>
<dbReference type="CDD" id="cd05765">
    <property type="entry name" value="IgI_3_WFIKKN-like"/>
    <property type="match status" value="1"/>
</dbReference>
<dbReference type="CDD" id="cd00104">
    <property type="entry name" value="KAZAL_FS"/>
    <property type="match status" value="1"/>
</dbReference>
<dbReference type="CDD" id="cd22605">
    <property type="entry name" value="Kunitz_WFIKKN_1-like"/>
    <property type="match status" value="1"/>
</dbReference>
<dbReference type="CDD" id="cd22606">
    <property type="entry name" value="Kunitz_WFIKKN_2-like"/>
    <property type="match status" value="1"/>
</dbReference>
<dbReference type="CDD" id="cd03575">
    <property type="entry name" value="NTR_WFIKKN"/>
    <property type="match status" value="1"/>
</dbReference>
<dbReference type="FunFam" id="4.10.410.10:FF:000002">
    <property type="entry name" value="WAP, follistatin/kazal, immunoglobulin, kunitz and netrin domain-containing 2"/>
    <property type="match status" value="1"/>
</dbReference>
<dbReference type="FunFam" id="2.40.50.120:FF:000004">
    <property type="entry name" value="WAP, Kazal, immunoglobulin, Kunitz and NTR domain-containing protein 2"/>
    <property type="match status" value="1"/>
</dbReference>
<dbReference type="FunFam" id="2.60.40.10:FF:000473">
    <property type="entry name" value="WAP, Kazal, immunoglobulin, Kunitz and NTR domain-containing protein 2"/>
    <property type="match status" value="1"/>
</dbReference>
<dbReference type="FunFam" id="3.30.60.30:FF:000014">
    <property type="entry name" value="WAP, Kazal, immunoglobulin, Kunitz and NTR domain-containing protein 2"/>
    <property type="match status" value="1"/>
</dbReference>
<dbReference type="FunFam" id="4.10.410.10:FF:000009">
    <property type="entry name" value="WAP, Kazal, immunoglobulin, Kunitz and NTR domain-containing protein 2"/>
    <property type="match status" value="1"/>
</dbReference>
<dbReference type="FunFam" id="4.10.75.10:FF:000002">
    <property type="entry name" value="WAP, Kazal, immunoglobulin, Kunitz and NTR domain-containing protein 2"/>
    <property type="match status" value="1"/>
</dbReference>
<dbReference type="Gene3D" id="2.40.50.120">
    <property type="match status" value="1"/>
</dbReference>
<dbReference type="Gene3D" id="3.30.60.30">
    <property type="match status" value="1"/>
</dbReference>
<dbReference type="Gene3D" id="4.10.75.10">
    <property type="entry name" value="Elafin-like"/>
    <property type="match status" value="1"/>
</dbReference>
<dbReference type="Gene3D" id="2.60.40.10">
    <property type="entry name" value="Immunoglobulins"/>
    <property type="match status" value="1"/>
</dbReference>
<dbReference type="Gene3D" id="4.10.410.10">
    <property type="entry name" value="Pancreatic trypsin inhibitor Kunitz domain"/>
    <property type="match status" value="2"/>
</dbReference>
<dbReference type="InterPro" id="IPR036645">
    <property type="entry name" value="Elafin-like_sf"/>
</dbReference>
<dbReference type="InterPro" id="IPR007110">
    <property type="entry name" value="Ig-like_dom"/>
</dbReference>
<dbReference type="InterPro" id="IPR036179">
    <property type="entry name" value="Ig-like_dom_sf"/>
</dbReference>
<dbReference type="InterPro" id="IPR013783">
    <property type="entry name" value="Ig-like_fold"/>
</dbReference>
<dbReference type="InterPro" id="IPR013098">
    <property type="entry name" value="Ig_I-set"/>
</dbReference>
<dbReference type="InterPro" id="IPR003599">
    <property type="entry name" value="Ig_sub"/>
</dbReference>
<dbReference type="InterPro" id="IPR003598">
    <property type="entry name" value="Ig_sub2"/>
</dbReference>
<dbReference type="InterPro" id="IPR002350">
    <property type="entry name" value="Kazal_dom"/>
</dbReference>
<dbReference type="InterPro" id="IPR036058">
    <property type="entry name" value="Kazal_dom_sf"/>
</dbReference>
<dbReference type="InterPro" id="IPR002223">
    <property type="entry name" value="Kunitz_BPTI"/>
</dbReference>
<dbReference type="InterPro" id="IPR036880">
    <property type="entry name" value="Kunitz_BPTI_sf"/>
</dbReference>
<dbReference type="InterPro" id="IPR001134">
    <property type="entry name" value="Netrin_domain"/>
</dbReference>
<dbReference type="InterPro" id="IPR018933">
    <property type="entry name" value="Netrin_module_non-TIMP"/>
</dbReference>
<dbReference type="InterPro" id="IPR020901">
    <property type="entry name" value="Prtase_inh_Kunz-CS"/>
</dbReference>
<dbReference type="InterPro" id="IPR008993">
    <property type="entry name" value="TIMP-like_OB-fold"/>
</dbReference>
<dbReference type="InterPro" id="IPR008197">
    <property type="entry name" value="WAP_dom"/>
</dbReference>
<dbReference type="InterPro" id="IPR033638">
    <property type="entry name" value="WFIKKN1/2_Ig-like_3"/>
</dbReference>
<dbReference type="PANTHER" id="PTHR45938">
    <property type="entry name" value="ACP24A4-RELATED"/>
    <property type="match status" value="1"/>
</dbReference>
<dbReference type="PANTHER" id="PTHR45938:SF7">
    <property type="entry name" value="WAP, KAZAL, IMMUNOGLOBULIN, KUNITZ AND NTR DOMAIN-CONTAINING PROTEIN 2"/>
    <property type="match status" value="1"/>
</dbReference>
<dbReference type="Pfam" id="PF07679">
    <property type="entry name" value="I-set"/>
    <property type="match status" value="1"/>
</dbReference>
<dbReference type="Pfam" id="PF00014">
    <property type="entry name" value="Kunitz_BPTI"/>
    <property type="match status" value="2"/>
</dbReference>
<dbReference type="Pfam" id="PF01759">
    <property type="entry name" value="NTR"/>
    <property type="match status" value="1"/>
</dbReference>
<dbReference type="Pfam" id="PF00095">
    <property type="entry name" value="WAP"/>
    <property type="match status" value="1"/>
</dbReference>
<dbReference type="PRINTS" id="PR00759">
    <property type="entry name" value="BASICPTASE"/>
</dbReference>
<dbReference type="SMART" id="SM00409">
    <property type="entry name" value="IG"/>
    <property type="match status" value="1"/>
</dbReference>
<dbReference type="SMART" id="SM00408">
    <property type="entry name" value="IGc2"/>
    <property type="match status" value="1"/>
</dbReference>
<dbReference type="SMART" id="SM00131">
    <property type="entry name" value="KU"/>
    <property type="match status" value="2"/>
</dbReference>
<dbReference type="SMART" id="SM00217">
    <property type="entry name" value="WAP"/>
    <property type="match status" value="1"/>
</dbReference>
<dbReference type="SUPFAM" id="SSF57362">
    <property type="entry name" value="BPTI-like"/>
    <property type="match status" value="2"/>
</dbReference>
<dbReference type="SUPFAM" id="SSF57256">
    <property type="entry name" value="Elafin-like"/>
    <property type="match status" value="1"/>
</dbReference>
<dbReference type="SUPFAM" id="SSF48726">
    <property type="entry name" value="Immunoglobulin"/>
    <property type="match status" value="1"/>
</dbReference>
<dbReference type="SUPFAM" id="SSF100895">
    <property type="entry name" value="Kazal-type serine protease inhibitors"/>
    <property type="match status" value="1"/>
</dbReference>
<dbReference type="SUPFAM" id="SSF50242">
    <property type="entry name" value="TIMP-like"/>
    <property type="match status" value="1"/>
</dbReference>
<dbReference type="PROSITE" id="PS00280">
    <property type="entry name" value="BPTI_KUNITZ_1"/>
    <property type="match status" value="1"/>
</dbReference>
<dbReference type="PROSITE" id="PS50279">
    <property type="entry name" value="BPTI_KUNITZ_2"/>
    <property type="match status" value="2"/>
</dbReference>
<dbReference type="PROSITE" id="PS50835">
    <property type="entry name" value="IG_LIKE"/>
    <property type="match status" value="1"/>
</dbReference>
<dbReference type="PROSITE" id="PS51465">
    <property type="entry name" value="KAZAL_2"/>
    <property type="match status" value="1"/>
</dbReference>
<dbReference type="PROSITE" id="PS50189">
    <property type="entry name" value="NTR"/>
    <property type="match status" value="1"/>
</dbReference>
<dbReference type="PROSITE" id="PS51390">
    <property type="entry name" value="WAP"/>
    <property type="match status" value="1"/>
</dbReference>
<feature type="signal peptide" evidence="7">
    <location>
        <begin position="1"/>
        <end position="29"/>
    </location>
</feature>
<feature type="chain" id="PRO_0000307821" description="WAP, Kazal, immunoglobulin, Kunitz and NTR domain-containing protein 2">
    <location>
        <begin position="30"/>
        <end position="571"/>
    </location>
</feature>
<feature type="domain" description="WAP" evidence="5">
    <location>
        <begin position="34"/>
        <end position="87"/>
    </location>
</feature>
<feature type="domain" description="Kazal-like" evidence="6">
    <location>
        <begin position="121"/>
        <end position="172"/>
    </location>
</feature>
<feature type="domain" description="Ig-like C2-type">
    <location>
        <begin position="205"/>
        <end position="298"/>
    </location>
</feature>
<feature type="domain" description="BPTI/Kunitz inhibitor 1" evidence="3">
    <location>
        <begin position="323"/>
        <end position="373"/>
    </location>
</feature>
<feature type="domain" description="BPTI/Kunitz inhibitor 2" evidence="3">
    <location>
        <begin position="381"/>
        <end position="431"/>
    </location>
</feature>
<feature type="domain" description="NTR" evidence="4">
    <location>
        <begin position="440"/>
        <end position="561"/>
    </location>
</feature>
<feature type="site" description="Reactive bond" evidence="6">
    <location>
        <begin position="135"/>
        <end position="136"/>
    </location>
</feature>
<feature type="glycosylation site" description="N-linked (GlcNAc...) asparagine" evidence="2">
    <location>
        <position position="314"/>
    </location>
</feature>
<feature type="glycosylation site" description="N-linked (GlcNAc...) asparagine" evidence="2">
    <location>
        <position position="514"/>
    </location>
</feature>
<feature type="disulfide bond" evidence="1">
    <location>
        <begin position="41"/>
        <end position="74"/>
    </location>
</feature>
<feature type="disulfide bond" evidence="1">
    <location>
        <begin position="57"/>
        <end position="78"/>
    </location>
</feature>
<feature type="disulfide bond" evidence="1">
    <location>
        <begin position="61"/>
        <end position="73"/>
    </location>
</feature>
<feature type="disulfide bond" evidence="1">
    <location>
        <begin position="67"/>
        <end position="83"/>
    </location>
</feature>
<feature type="disulfide bond" evidence="1">
    <location>
        <begin position="129"/>
        <end position="159"/>
    </location>
</feature>
<feature type="disulfide bond" evidence="1">
    <location>
        <begin position="133"/>
        <end position="152"/>
    </location>
</feature>
<feature type="disulfide bond" evidence="1">
    <location>
        <begin position="141"/>
        <end position="170"/>
    </location>
</feature>
<feature type="disulfide bond" evidence="1">
    <location>
        <begin position="226"/>
        <end position="282"/>
    </location>
</feature>
<feature type="disulfide bond" evidence="1">
    <location>
        <begin position="323"/>
        <end position="373"/>
    </location>
</feature>
<feature type="disulfide bond" evidence="1">
    <location>
        <begin position="332"/>
        <end position="356"/>
    </location>
</feature>
<feature type="disulfide bond" evidence="1">
    <location>
        <begin position="348"/>
        <end position="369"/>
    </location>
</feature>
<feature type="disulfide bond" evidence="1">
    <location>
        <begin position="381"/>
        <end position="431"/>
    </location>
</feature>
<feature type="disulfide bond" evidence="1">
    <location>
        <begin position="390"/>
        <end position="414"/>
    </location>
</feature>
<feature type="disulfide bond" evidence="1">
    <location>
        <begin position="406"/>
        <end position="427"/>
    </location>
</feature>
<feature type="disulfide bond" evidence="1">
    <location>
        <begin position="440"/>
        <end position="510"/>
    </location>
</feature>
<feature type="disulfide bond" evidence="1">
    <location>
        <begin position="443"/>
        <end position="512"/>
    </location>
</feature>
<feature type="disulfide bond" evidence="1">
    <location>
        <begin position="454"/>
        <end position="561"/>
    </location>
</feature>
<feature type="sequence conflict" description="In Ref. 1; AAP72503." evidence="8" ref="1">
    <original>I</original>
    <variation>T</variation>
    <location>
        <position position="380"/>
    </location>
</feature>
<feature type="strand" evidence="9">
    <location>
        <begin position="116"/>
        <end position="121"/>
    </location>
</feature>
<feature type="strand" evidence="9">
    <location>
        <begin position="124"/>
        <end position="129"/>
    </location>
</feature>
<feature type="strand" evidence="9">
    <location>
        <begin position="140"/>
        <end position="142"/>
    </location>
</feature>
<feature type="strand" evidence="9">
    <location>
        <begin position="147"/>
        <end position="150"/>
    </location>
</feature>
<feature type="helix" evidence="9">
    <location>
        <begin position="151"/>
        <end position="161"/>
    </location>
</feature>
<gene>
    <name type="primary">Wfikkn2</name>
    <name type="synonym">Gasp1</name>
</gene>
<protein>
    <recommendedName>
        <fullName>WAP, Kazal, immunoglobulin, Kunitz and NTR domain-containing protein 2</fullName>
    </recommendedName>
    <alternativeName>
        <fullName>Growth and differentiation factor-associated serum protein 1</fullName>
        <shortName>GASP-1</shortName>
        <shortName>mGASP-1</shortName>
    </alternativeName>
</protein>
<comment type="function">
    <text evidence="1">Protease-inhibitor that contains multiple distinct protease inhibitor domains. Probably has serine protease- and metalloprotease-inhibitor activity (By similarity). Inhibits the biological activity of mature myostatin, but not activin.</text>
</comment>
<comment type="subunit">
    <text evidence="7">Interacts with both mature and propeptide myostatin/MSTN.</text>
</comment>
<comment type="subcellular location">
    <subcellularLocation>
        <location evidence="7">Secreted</location>
    </subcellularLocation>
</comment>
<comment type="tissue specificity">
    <text evidence="7">Widely expressed, with high expression in skeletal muscle and heart. Also expressed in brain, lung and testis. Weakly expressed in liver and kidney.</text>
</comment>
<comment type="similarity">
    <text evidence="8">Belongs to the WFIKKN family.</text>
</comment>